<reference key="1">
    <citation type="journal article" date="1978" name="J. Biochem.">
        <title>Amino acid sequence of Aphanothece sacrum ferredoxin II (minor component). Structural characteristics and evolutionary implications.</title>
        <authorList>
            <person name="Hase T."/>
            <person name="Wakabayashi S."/>
            <person name="Wada K."/>
            <person name="Matsubara H."/>
        </authorList>
    </citation>
    <scope>PROTEIN SEQUENCE OF 2-100</scope>
</reference>
<evidence type="ECO:0000255" key="1">
    <source>
        <dbReference type="PROSITE-ProRule" id="PRU00465"/>
    </source>
</evidence>
<evidence type="ECO:0000269" key="2">
    <source>
    </source>
</evidence>
<evidence type="ECO:0000305" key="3"/>
<protein>
    <recommendedName>
        <fullName>Ferredoxin-2</fullName>
    </recommendedName>
    <alternativeName>
        <fullName>Ferredoxin II</fullName>
    </alternativeName>
</protein>
<keyword id="KW-0001">2Fe-2S</keyword>
<keyword id="KW-0903">Direct protein sequencing</keyword>
<keyword id="KW-0249">Electron transport</keyword>
<keyword id="KW-0408">Iron</keyword>
<keyword id="KW-0411">Iron-sulfur</keyword>
<keyword id="KW-0479">Metal-binding</keyword>
<keyword id="KW-0813">Transport</keyword>
<comment type="function">
    <text>Ferredoxins are iron-sulfur proteins that transfer electrons in a wide variety of metabolic reactions.</text>
</comment>
<comment type="cofactor">
    <cofactor>
        <name>[2Fe-2S] cluster</name>
        <dbReference type="ChEBI" id="CHEBI:190135"/>
    </cofactor>
    <text>Binds 1 [2Fe-2S] cluster.</text>
</comment>
<comment type="similarity">
    <text evidence="3">Belongs to the 2Fe2S plant-type ferredoxin family.</text>
</comment>
<name>FER2_APHSA</name>
<accession>P00251</accession>
<dbReference type="PIR" id="A00255">
    <property type="entry name" value="FEAH2"/>
</dbReference>
<dbReference type="SMR" id="P00251"/>
<dbReference type="GO" id="GO:0051537">
    <property type="term" value="F:2 iron, 2 sulfur cluster binding"/>
    <property type="evidence" value="ECO:0007669"/>
    <property type="project" value="UniProtKB-KW"/>
</dbReference>
<dbReference type="GO" id="GO:0009055">
    <property type="term" value="F:electron transfer activity"/>
    <property type="evidence" value="ECO:0007669"/>
    <property type="project" value="InterPro"/>
</dbReference>
<dbReference type="GO" id="GO:0046872">
    <property type="term" value="F:metal ion binding"/>
    <property type="evidence" value="ECO:0007669"/>
    <property type="project" value="UniProtKB-KW"/>
</dbReference>
<dbReference type="GO" id="GO:0022900">
    <property type="term" value="P:electron transport chain"/>
    <property type="evidence" value="ECO:0007669"/>
    <property type="project" value="InterPro"/>
</dbReference>
<dbReference type="CDD" id="cd00207">
    <property type="entry name" value="fer2"/>
    <property type="match status" value="1"/>
</dbReference>
<dbReference type="Gene3D" id="3.10.20.30">
    <property type="match status" value="1"/>
</dbReference>
<dbReference type="InterPro" id="IPR036010">
    <property type="entry name" value="2Fe-2S_ferredoxin-like_sf"/>
</dbReference>
<dbReference type="InterPro" id="IPR001041">
    <property type="entry name" value="2Fe-2S_ferredoxin-type"/>
</dbReference>
<dbReference type="InterPro" id="IPR006058">
    <property type="entry name" value="2Fe2S_fd_BS"/>
</dbReference>
<dbReference type="InterPro" id="IPR012675">
    <property type="entry name" value="Beta-grasp_dom_sf"/>
</dbReference>
<dbReference type="InterPro" id="IPR010241">
    <property type="entry name" value="Fd_pln"/>
</dbReference>
<dbReference type="NCBIfam" id="TIGR02008">
    <property type="entry name" value="fdx_plant"/>
    <property type="match status" value="1"/>
</dbReference>
<dbReference type="PANTHER" id="PTHR43112">
    <property type="entry name" value="FERREDOXIN"/>
    <property type="match status" value="1"/>
</dbReference>
<dbReference type="PANTHER" id="PTHR43112:SF3">
    <property type="entry name" value="FERREDOXIN-2, CHLOROPLASTIC"/>
    <property type="match status" value="1"/>
</dbReference>
<dbReference type="Pfam" id="PF00111">
    <property type="entry name" value="Fer2"/>
    <property type="match status" value="1"/>
</dbReference>
<dbReference type="SUPFAM" id="SSF54292">
    <property type="entry name" value="2Fe-2S ferredoxin-like"/>
    <property type="match status" value="1"/>
</dbReference>
<dbReference type="PROSITE" id="PS00197">
    <property type="entry name" value="2FE2S_FER_1"/>
    <property type="match status" value="1"/>
</dbReference>
<dbReference type="PROSITE" id="PS51085">
    <property type="entry name" value="2FE2S_FER_2"/>
    <property type="match status" value="1"/>
</dbReference>
<feature type="initiator methionine" description="Removed" evidence="2">
    <location>
        <position position="1"/>
    </location>
</feature>
<feature type="chain" id="PRO_0000189307" description="Ferredoxin-2">
    <location>
        <begin position="2"/>
        <end position="100"/>
    </location>
</feature>
<feature type="domain" description="2Fe-2S ferredoxin-type" evidence="1">
    <location>
        <begin position="4"/>
        <end position="97"/>
    </location>
</feature>
<feature type="binding site" evidence="1">
    <location>
        <position position="42"/>
    </location>
    <ligand>
        <name>[2Fe-2S] cluster</name>
        <dbReference type="ChEBI" id="CHEBI:190135"/>
    </ligand>
</feature>
<feature type="binding site" evidence="1">
    <location>
        <position position="47"/>
    </location>
    <ligand>
        <name>[2Fe-2S] cluster</name>
        <dbReference type="ChEBI" id="CHEBI:190135"/>
    </ligand>
</feature>
<feature type="binding site" evidence="1">
    <location>
        <position position="50"/>
    </location>
    <ligand>
        <name>[2Fe-2S] cluster</name>
        <dbReference type="ChEBI" id="CHEBI:190135"/>
    </ligand>
</feature>
<feature type="binding site" evidence="1">
    <location>
        <position position="81"/>
    </location>
    <ligand>
        <name>[2Fe-2S] cluster</name>
        <dbReference type="ChEBI" id="CHEBI:190135"/>
    </ligand>
</feature>
<organism>
    <name type="scientific">Aphanothece sacrum</name>
    <dbReference type="NCBI Taxonomy" id="1122"/>
    <lineage>
        <taxon>Bacteria</taxon>
        <taxon>Bacillati</taxon>
        <taxon>Cyanobacteriota</taxon>
        <taxon>Cyanophyceae</taxon>
        <taxon>Oscillatoriophycideae</taxon>
        <taxon>Chroococcales</taxon>
        <taxon>Aphanothecaceae</taxon>
        <taxon>Aphanothece</taxon>
    </lineage>
</organism>
<proteinExistence type="evidence at protein level"/>
<sequence length="100" mass="10486">MATYKVTLINEEEGINAILEVADDQTILDAGEEAGLDLPSSCRAGSCSTCAGKLVSGAAPNQDDQAFLDDDQLAAGWVMTCVAYPTGDCTIMTHQESEVL</sequence>